<comment type="function">
    <text evidence="1">Transfers and isomerizes the ribose moiety from AdoMet to the 7-aminomethyl group of 7-deazaguanine (preQ1-tRNA) to give epoxyqueuosine (oQ-tRNA).</text>
</comment>
<comment type="catalytic activity">
    <reaction evidence="1">
        <text>7-aminomethyl-7-carbaguanosine(34) in tRNA + S-adenosyl-L-methionine = epoxyqueuosine(34) in tRNA + adenine + L-methionine + 2 H(+)</text>
        <dbReference type="Rhea" id="RHEA:32155"/>
        <dbReference type="Rhea" id="RHEA-COMP:10342"/>
        <dbReference type="Rhea" id="RHEA-COMP:18582"/>
        <dbReference type="ChEBI" id="CHEBI:15378"/>
        <dbReference type="ChEBI" id="CHEBI:16708"/>
        <dbReference type="ChEBI" id="CHEBI:57844"/>
        <dbReference type="ChEBI" id="CHEBI:59789"/>
        <dbReference type="ChEBI" id="CHEBI:82833"/>
        <dbReference type="ChEBI" id="CHEBI:194443"/>
        <dbReference type="EC" id="2.4.99.17"/>
    </reaction>
</comment>
<comment type="pathway">
    <text evidence="1">tRNA modification; tRNA-queuosine biosynthesis.</text>
</comment>
<comment type="subunit">
    <text evidence="1">Monomer.</text>
</comment>
<comment type="subcellular location">
    <subcellularLocation>
        <location evidence="1">Cytoplasm</location>
    </subcellularLocation>
</comment>
<comment type="similarity">
    <text evidence="1">Belongs to the QueA family.</text>
</comment>
<sequence>MRLSDFDFALPEGLVAQAPVTPRDASRLMVLAPGEGAPAHRGFADLPELLAPGDLLVFNDTRVIPARLLGHKASGGKVELLLCEPLEGGLGRRWRAMGQASKPIREGAVLTFDGLEARVDGVEGEGFYRVTLDRQGPELEAALGRAGRIPLPPYIRRAPDAEDAARYQTIWARAPGSAAAPTAGLHFTEPLLARLAARGIRRTAVTLHVGPGTFLPIRGDDLDLHRMHGERYEVSPAAAEELAATRARGGRIVAVGTTSVRTLESAWRDGAVAAGPGRTELFIRPGHPFHAVDAMVTNFHLPRSTLLVLVCAFGGQGRVLAAYREAVARGYRFFSYGDAMLVLRR</sequence>
<dbReference type="EC" id="2.4.99.17" evidence="1"/>
<dbReference type="EMBL" id="CP001131">
    <property type="protein sequence ID" value="ACG72537.1"/>
    <property type="molecule type" value="Genomic_DNA"/>
</dbReference>
<dbReference type="RefSeq" id="WP_012525360.1">
    <property type="nucleotide sequence ID" value="NC_011145.1"/>
</dbReference>
<dbReference type="SMR" id="B4UID2"/>
<dbReference type="KEGG" id="ank:AnaeK_1305"/>
<dbReference type="HOGENOM" id="CLU_039110_1_0_7"/>
<dbReference type="OrthoDB" id="9805933at2"/>
<dbReference type="UniPathway" id="UPA00392"/>
<dbReference type="Proteomes" id="UP000001871">
    <property type="component" value="Chromosome"/>
</dbReference>
<dbReference type="GO" id="GO:0005737">
    <property type="term" value="C:cytoplasm"/>
    <property type="evidence" value="ECO:0007669"/>
    <property type="project" value="UniProtKB-SubCell"/>
</dbReference>
<dbReference type="GO" id="GO:0051075">
    <property type="term" value="F:S-adenosylmethionine:tRNA ribosyltransferase-isomerase activity"/>
    <property type="evidence" value="ECO:0007669"/>
    <property type="project" value="UniProtKB-EC"/>
</dbReference>
<dbReference type="GO" id="GO:0008616">
    <property type="term" value="P:queuosine biosynthetic process"/>
    <property type="evidence" value="ECO:0007669"/>
    <property type="project" value="UniProtKB-UniRule"/>
</dbReference>
<dbReference type="GO" id="GO:0002099">
    <property type="term" value="P:tRNA wobble guanine modification"/>
    <property type="evidence" value="ECO:0007669"/>
    <property type="project" value="TreeGrafter"/>
</dbReference>
<dbReference type="Gene3D" id="2.40.10.240">
    <property type="entry name" value="QueA-like"/>
    <property type="match status" value="1"/>
</dbReference>
<dbReference type="Gene3D" id="3.40.1780.10">
    <property type="entry name" value="QueA-like"/>
    <property type="match status" value="1"/>
</dbReference>
<dbReference type="HAMAP" id="MF_00113">
    <property type="entry name" value="QueA"/>
    <property type="match status" value="1"/>
</dbReference>
<dbReference type="InterPro" id="IPR003699">
    <property type="entry name" value="QueA"/>
</dbReference>
<dbReference type="InterPro" id="IPR042118">
    <property type="entry name" value="QueA_dom1"/>
</dbReference>
<dbReference type="InterPro" id="IPR042119">
    <property type="entry name" value="QueA_dom2"/>
</dbReference>
<dbReference type="InterPro" id="IPR036100">
    <property type="entry name" value="QueA_sf"/>
</dbReference>
<dbReference type="NCBIfam" id="NF001140">
    <property type="entry name" value="PRK00147.1"/>
    <property type="match status" value="1"/>
</dbReference>
<dbReference type="NCBIfam" id="TIGR00113">
    <property type="entry name" value="queA"/>
    <property type="match status" value="1"/>
</dbReference>
<dbReference type="PANTHER" id="PTHR30307">
    <property type="entry name" value="S-ADENOSYLMETHIONINE:TRNA RIBOSYLTRANSFERASE-ISOMERASE"/>
    <property type="match status" value="1"/>
</dbReference>
<dbReference type="PANTHER" id="PTHR30307:SF0">
    <property type="entry name" value="S-ADENOSYLMETHIONINE:TRNA RIBOSYLTRANSFERASE-ISOMERASE"/>
    <property type="match status" value="1"/>
</dbReference>
<dbReference type="Pfam" id="PF02547">
    <property type="entry name" value="Queuosine_synth"/>
    <property type="match status" value="1"/>
</dbReference>
<dbReference type="SUPFAM" id="SSF111337">
    <property type="entry name" value="QueA-like"/>
    <property type="match status" value="1"/>
</dbReference>
<accession>B4UID2</accession>
<keyword id="KW-0963">Cytoplasm</keyword>
<keyword id="KW-0671">Queuosine biosynthesis</keyword>
<keyword id="KW-0949">S-adenosyl-L-methionine</keyword>
<keyword id="KW-0808">Transferase</keyword>
<gene>
    <name evidence="1" type="primary">queA</name>
    <name type="ordered locus">AnaeK_1305</name>
</gene>
<protein>
    <recommendedName>
        <fullName evidence="1">S-adenosylmethionine:tRNA ribosyltransferase-isomerase</fullName>
        <ecNumber evidence="1">2.4.99.17</ecNumber>
    </recommendedName>
    <alternativeName>
        <fullName evidence="1">Queuosine biosynthesis protein QueA</fullName>
    </alternativeName>
</protein>
<evidence type="ECO:0000255" key="1">
    <source>
        <dbReference type="HAMAP-Rule" id="MF_00113"/>
    </source>
</evidence>
<organism>
    <name type="scientific">Anaeromyxobacter sp. (strain K)</name>
    <dbReference type="NCBI Taxonomy" id="447217"/>
    <lineage>
        <taxon>Bacteria</taxon>
        <taxon>Pseudomonadati</taxon>
        <taxon>Myxococcota</taxon>
        <taxon>Myxococcia</taxon>
        <taxon>Myxococcales</taxon>
        <taxon>Cystobacterineae</taxon>
        <taxon>Anaeromyxobacteraceae</taxon>
        <taxon>Anaeromyxobacter</taxon>
    </lineage>
</organism>
<feature type="chain" id="PRO_1000094750" description="S-adenosylmethionine:tRNA ribosyltransferase-isomerase">
    <location>
        <begin position="1"/>
        <end position="345"/>
    </location>
</feature>
<name>QUEA_ANASK</name>
<reference key="1">
    <citation type="submission" date="2008-08" db="EMBL/GenBank/DDBJ databases">
        <title>Complete sequence of Anaeromyxobacter sp. K.</title>
        <authorList>
            <consortium name="US DOE Joint Genome Institute"/>
            <person name="Lucas S."/>
            <person name="Copeland A."/>
            <person name="Lapidus A."/>
            <person name="Glavina del Rio T."/>
            <person name="Dalin E."/>
            <person name="Tice H."/>
            <person name="Bruce D."/>
            <person name="Goodwin L."/>
            <person name="Pitluck S."/>
            <person name="Saunders E."/>
            <person name="Brettin T."/>
            <person name="Detter J.C."/>
            <person name="Han C."/>
            <person name="Larimer F."/>
            <person name="Land M."/>
            <person name="Hauser L."/>
            <person name="Kyrpides N."/>
            <person name="Ovchinnikiva G."/>
            <person name="Beliaev A."/>
        </authorList>
    </citation>
    <scope>NUCLEOTIDE SEQUENCE [LARGE SCALE GENOMIC DNA]</scope>
    <source>
        <strain>K</strain>
    </source>
</reference>
<proteinExistence type="inferred from homology"/>